<sequence length="1448" mass="160852">MALETEAKNSNATATGDATATATKASGKAKENNNTAGGKKNLNPNSNQQNSNQNLVNGNGTAADGPAAKKKGKKNRNKSPTEPTTEAVLSNGHAEKPTVVDAVEDNADTNANVEKPQEGGAPDAEADGDDIDLDALQDIGITVNISSPGADLLCVQLSSMELVQEIHQLLMDREETCHRTCFSLQLDNVTLDNFAELKSINNLEQGSTIKVVEEPYTMREARIHVRHVRDLLKNLDPADAYNGIDCTSLTYLNTITQGDLLDKKRTRPDSVDCTPPEYVTPGVSDPPILPLHPNVKNAKGPQALKVLTTSAWNPPPGPRKLHGDLMYLYVVTMEDKRFHISACSKGFFINQSTDDTFNPKPDNPSHLSHSLIDLLSHISPSFRRAFQTIQKRRTMRHAFERVATPYQVYQWAAPILEHTVDAIRAEDAFSSKLGYEEHIPGQTRDWNEELQTTRELPRKTLPERLLRERAIFKVHGDFVTAATRGAMAVIDGNVLAINPGEDTKMQMFIWNNIFFSMGFDVRDHYKELGGDAAAFVAPRYDLHGVRVYNAVDIEGLYTLGTVVVDYRGYRVTAQSIIPGILEREQEQSVVYGSIDFGKTVLSHPKYLELLRQAGKHLKILPHVVLNERDEPVELCSSVECKGIIGNDGRHYILDLLRTFPPDVNFLKLQDVQLSKELVDMGFPIEHRHKLCCLRQELLEAFIEDRHVNFIRIAAARLQQLTTIKQSEKSEANPVPALEGAEAASKVNGAEKPDDKEKKNEEEEKKERSTSGEARAAAIVNAIREAQSNVATSNEVQAAEVVKRACAAVGSLKEKEFDFRFNPDVFSPGIRHADGEEGTSLAKQKVLVQEAAEFLVLKQIPAFIKEHMSHSSSPIDGQSLTESLHSHGINVRYLGKVIKILSQMPRMDYLHRIAVLELIVRATKHIYYTYMQNTEPLHLSAAISHFLNCLLTNGPVNPAVSSEEAHKKRGNGGKHNKHKSSKGGKGQQQQQTTGNQNGSSSGSSNSSSASDWTLMTPRSLWQQIRKEAKVYWDWELDCDSIETAVSKYGILRISLMRAFCLKVGIQVLLREYNFESKHKPTFGDDDIVNVFPIVKHISPRATDAYNFYTTGQAKIQQGLFKEGYELISGALNLLNNVFGALHQENGSCLRMLARLSYLLGDAQDALAIQQRAVIMSERVNGMDHPSTILEYTHLSLYSFANGHVGMSLKLLYRARYLMVLICGEDHPEVALIDSNISLILHALGEYELSLRFIEHALKLNLKYFGDKDMHVALSYHLMARTQSCMGDFRSALNNEKETYSFYKSQLGENHEKTRDSAECLRLLTQQAVLLQRKMNDIYSSGKLTSDLPPIHITPPSMGSVLDMLNTINGILFVKISRKDIVKVRSEIEKHFKTDSTENEVNDAINSIVAAANNNGEAEDAVSKDIKEQPEAGKQLTNGDKAAATEATSS</sequence>
<protein>
    <recommendedName>
        <fullName evidence="2">Protein clueless</fullName>
    </recommendedName>
    <alternativeName>
        <fullName evidence="2">Clustered mitochondria protein homolog</fullName>
    </alternativeName>
</protein>
<evidence type="ECO:0000250" key="1"/>
<evidence type="ECO:0000255" key="2">
    <source>
        <dbReference type="HAMAP-Rule" id="MF_03013"/>
    </source>
</evidence>
<evidence type="ECO:0000255" key="3">
    <source>
        <dbReference type="PROSITE-ProRule" id="PRU01167"/>
    </source>
</evidence>
<evidence type="ECO:0000256" key="4">
    <source>
        <dbReference type="SAM" id="MobiDB-lite"/>
    </source>
</evidence>
<evidence type="ECO:0000269" key="5">
    <source>
    </source>
</evidence>
<evidence type="ECO:0000305" key="6"/>
<organism>
    <name type="scientific">Drosophila melanogaster</name>
    <name type="common">Fruit fly</name>
    <dbReference type="NCBI Taxonomy" id="7227"/>
    <lineage>
        <taxon>Eukaryota</taxon>
        <taxon>Metazoa</taxon>
        <taxon>Ecdysozoa</taxon>
        <taxon>Arthropoda</taxon>
        <taxon>Hexapoda</taxon>
        <taxon>Insecta</taxon>
        <taxon>Pterygota</taxon>
        <taxon>Neoptera</taxon>
        <taxon>Endopterygota</taxon>
        <taxon>Diptera</taxon>
        <taxon>Brachycera</taxon>
        <taxon>Muscomorpha</taxon>
        <taxon>Ephydroidea</taxon>
        <taxon>Drosophilidae</taxon>
        <taxon>Drosophila</taxon>
        <taxon>Sophophora</taxon>
    </lineage>
</organism>
<comment type="function">
    <text evidence="2 5">mRNA-binding protein involved in proper cytoplasmic distribution of mitochondria.</text>
</comment>
<comment type="subcellular location">
    <subcellularLocation>
        <location evidence="2 5">Cytoplasm</location>
    </subcellularLocation>
</comment>
<comment type="disruption phenotype">
    <text evidence="5">Causes mitochondria to cluster within cells.</text>
</comment>
<comment type="similarity">
    <text evidence="2">Belongs to the CLU family.</text>
</comment>
<proteinExistence type="evidence at protein level"/>
<keyword id="KW-0963">Cytoplasm</keyword>
<keyword id="KW-0597">Phosphoprotein</keyword>
<keyword id="KW-1185">Reference proteome</keyword>
<gene>
    <name evidence="2" type="primary">clu</name>
    <name type="ORF">CG8443</name>
</gene>
<name>CLU_DROME</name>
<feature type="chain" id="PRO_0000366382" description="Protein clueless">
    <location>
        <begin position="1"/>
        <end position="1448"/>
    </location>
</feature>
<feature type="domain" description="Clu" evidence="3">
    <location>
        <begin position="424"/>
        <end position="666"/>
    </location>
</feature>
<feature type="region of interest" description="Disordered" evidence="4">
    <location>
        <begin position="1"/>
        <end position="96"/>
    </location>
</feature>
<feature type="region of interest" description="Disordered" evidence="4">
    <location>
        <begin position="110"/>
        <end position="129"/>
    </location>
</feature>
<feature type="region of interest" description="Disordered" evidence="4">
    <location>
        <begin position="265"/>
        <end position="286"/>
    </location>
</feature>
<feature type="region of interest" description="Disordered" evidence="4">
    <location>
        <begin position="726"/>
        <end position="773"/>
    </location>
</feature>
<feature type="region of interest" description="Disordered" evidence="4">
    <location>
        <begin position="958"/>
        <end position="1010"/>
    </location>
</feature>
<feature type="region of interest" description="Disordered" evidence="4">
    <location>
        <begin position="1414"/>
        <end position="1448"/>
    </location>
</feature>
<feature type="compositionally biased region" description="Low complexity" evidence="4">
    <location>
        <begin position="9"/>
        <end position="26"/>
    </location>
</feature>
<feature type="compositionally biased region" description="Low complexity" evidence="4">
    <location>
        <begin position="41"/>
        <end position="66"/>
    </location>
</feature>
<feature type="compositionally biased region" description="Basic residues" evidence="4">
    <location>
        <begin position="68"/>
        <end position="77"/>
    </location>
</feature>
<feature type="compositionally biased region" description="Polar residues" evidence="4">
    <location>
        <begin position="78"/>
        <end position="88"/>
    </location>
</feature>
<feature type="compositionally biased region" description="Basic and acidic residues" evidence="4">
    <location>
        <begin position="748"/>
        <end position="769"/>
    </location>
</feature>
<feature type="compositionally biased region" description="Basic residues" evidence="4">
    <location>
        <begin position="966"/>
        <end position="981"/>
    </location>
</feature>
<feature type="compositionally biased region" description="Low complexity" evidence="4">
    <location>
        <begin position="986"/>
        <end position="1007"/>
    </location>
</feature>
<feature type="compositionally biased region" description="Basic and acidic residues" evidence="4">
    <location>
        <begin position="1419"/>
        <end position="1429"/>
    </location>
</feature>
<feature type="modified residue" description="Phosphoserine" evidence="1">
    <location>
        <position position="270"/>
    </location>
</feature>
<feature type="sequence conflict" description="In Ref. 3; AAR96136." evidence="6" ref="3">
    <location>
        <position position="495"/>
    </location>
</feature>
<feature type="sequence conflict" description="In Ref. 3; AAR96136." evidence="6" ref="3">
    <original>V</original>
    <variation>L</variation>
    <location>
        <position position="959"/>
    </location>
</feature>
<feature type="sequence conflict" description="In Ref. 3; AAR96136." evidence="6" ref="3">
    <original>K</original>
    <variation>R</variation>
    <location>
        <position position="1061"/>
    </location>
</feature>
<feature type="sequence conflict" description="In Ref. 3; AAR96136." evidence="6" ref="3">
    <original>T</original>
    <variation>A</variation>
    <location>
        <position position="1323"/>
    </location>
</feature>
<accession>A1ZAB5</accession>
<accession>Q6NNE5</accession>
<dbReference type="EMBL" id="AE013599">
    <property type="protein sequence ID" value="AAF58047.1"/>
    <property type="molecule type" value="Genomic_DNA"/>
</dbReference>
<dbReference type="EMBL" id="BT011344">
    <property type="protein sequence ID" value="AAR96136.1"/>
    <property type="molecule type" value="mRNA"/>
</dbReference>
<dbReference type="RefSeq" id="NP_611095.1">
    <property type="nucleotide sequence ID" value="NM_137251.3"/>
</dbReference>
<dbReference type="SMR" id="A1ZAB5"/>
<dbReference type="BioGRID" id="62513">
    <property type="interactions" value="31"/>
</dbReference>
<dbReference type="FunCoup" id="A1ZAB5">
    <property type="interactions" value="1725"/>
</dbReference>
<dbReference type="IntAct" id="A1ZAB5">
    <property type="interactions" value="6"/>
</dbReference>
<dbReference type="MINT" id="A1ZAB5"/>
<dbReference type="STRING" id="7227.FBpp0086380"/>
<dbReference type="GlyGen" id="A1ZAB5">
    <property type="glycosylation" value="1 site"/>
</dbReference>
<dbReference type="iPTMnet" id="A1ZAB5"/>
<dbReference type="PaxDb" id="7227-FBpp0086380"/>
<dbReference type="EnsemblMetazoa" id="FBtr0087242">
    <property type="protein sequence ID" value="FBpp0086380"/>
    <property type="gene ID" value="FBgn0034087"/>
</dbReference>
<dbReference type="GeneID" id="36793"/>
<dbReference type="KEGG" id="dme:Dmel_CG8443"/>
<dbReference type="UCSC" id="CG8443-RA">
    <property type="organism name" value="d. melanogaster"/>
</dbReference>
<dbReference type="AGR" id="FB:FBgn0034087"/>
<dbReference type="CTD" id="1191"/>
<dbReference type="FlyBase" id="FBgn0034087">
    <property type="gene designation" value="clu"/>
</dbReference>
<dbReference type="VEuPathDB" id="VectorBase:FBgn0034087"/>
<dbReference type="eggNOG" id="KOG1839">
    <property type="taxonomic scope" value="Eukaryota"/>
</dbReference>
<dbReference type="InParanoid" id="A1ZAB5"/>
<dbReference type="OMA" id="HPVWDKD"/>
<dbReference type="OrthoDB" id="1414216at2759"/>
<dbReference type="PhylomeDB" id="A1ZAB5"/>
<dbReference type="SignaLink" id="A1ZAB5"/>
<dbReference type="BioGRID-ORCS" id="36793">
    <property type="hits" value="0 hits in 1 CRISPR screen"/>
</dbReference>
<dbReference type="GenomeRNAi" id="36793"/>
<dbReference type="PRO" id="PR:A1ZAB5"/>
<dbReference type="Proteomes" id="UP000000803">
    <property type="component" value="Chromosome 2R"/>
</dbReference>
<dbReference type="Bgee" id="FBgn0034087">
    <property type="expression patterns" value="Expressed in posterior terminal follicle cell in ovary and 257 other cell types or tissues"/>
</dbReference>
<dbReference type="ExpressionAtlas" id="A1ZAB5">
    <property type="expression patterns" value="baseline and differential"/>
</dbReference>
<dbReference type="GO" id="GO:0005737">
    <property type="term" value="C:cytoplasm"/>
    <property type="evidence" value="ECO:0000318"/>
    <property type="project" value="GO_Central"/>
</dbReference>
<dbReference type="GO" id="GO:0005829">
    <property type="term" value="C:cytosol"/>
    <property type="evidence" value="ECO:0000314"/>
    <property type="project" value="FlyBase"/>
</dbReference>
<dbReference type="GO" id="GO:0003729">
    <property type="term" value="F:mRNA binding"/>
    <property type="evidence" value="ECO:0000314"/>
    <property type="project" value="FlyBase"/>
</dbReference>
<dbReference type="GO" id="GO:0043022">
    <property type="term" value="F:ribosome binding"/>
    <property type="evidence" value="ECO:0000314"/>
    <property type="project" value="FlyBase"/>
</dbReference>
<dbReference type="GO" id="GO:0055059">
    <property type="term" value="P:asymmetric neuroblast division"/>
    <property type="evidence" value="ECO:0000315"/>
    <property type="project" value="FlyBase"/>
</dbReference>
<dbReference type="GO" id="GO:0048312">
    <property type="term" value="P:intracellular distribution of mitochondria"/>
    <property type="evidence" value="ECO:0000318"/>
    <property type="project" value="GO_Central"/>
</dbReference>
<dbReference type="GO" id="GO:0051646">
    <property type="term" value="P:mitochondrion localization"/>
    <property type="evidence" value="ECO:0000315"/>
    <property type="project" value="FlyBase"/>
</dbReference>
<dbReference type="GO" id="GO:0007005">
    <property type="term" value="P:mitochondrion organization"/>
    <property type="evidence" value="ECO:0000315"/>
    <property type="project" value="FlyBase"/>
</dbReference>
<dbReference type="GO" id="GO:0033750">
    <property type="term" value="P:ribosome localization"/>
    <property type="evidence" value="ECO:0000353"/>
    <property type="project" value="FlyBase"/>
</dbReference>
<dbReference type="CDD" id="cd15466">
    <property type="entry name" value="CLU-central"/>
    <property type="match status" value="1"/>
</dbReference>
<dbReference type="FunFam" id="1.25.40.10:FF:000099">
    <property type="entry name" value="Clustered mitochondria protein homolog"/>
    <property type="match status" value="1"/>
</dbReference>
<dbReference type="FunFam" id="3.30.2280.10:FF:000002">
    <property type="entry name" value="Clustered mitochondria protein homolog"/>
    <property type="match status" value="1"/>
</dbReference>
<dbReference type="Gene3D" id="3.30.2280.10">
    <property type="entry name" value="Hypothetical protein (hspc210)"/>
    <property type="match status" value="1"/>
</dbReference>
<dbReference type="Gene3D" id="1.25.40.10">
    <property type="entry name" value="Tetratricopeptide repeat domain"/>
    <property type="match status" value="1"/>
</dbReference>
<dbReference type="HAMAP" id="MF_03013">
    <property type="entry name" value="CLU"/>
    <property type="match status" value="1"/>
</dbReference>
<dbReference type="InterPro" id="IPR033646">
    <property type="entry name" value="CLU-central"/>
</dbReference>
<dbReference type="InterPro" id="IPR025697">
    <property type="entry name" value="CLU_dom"/>
</dbReference>
<dbReference type="InterPro" id="IPR028275">
    <property type="entry name" value="CLU_N"/>
</dbReference>
<dbReference type="InterPro" id="IPR027523">
    <property type="entry name" value="CLU_prot"/>
</dbReference>
<dbReference type="InterPro" id="IPR007967">
    <property type="entry name" value="GSKIP_dom"/>
</dbReference>
<dbReference type="InterPro" id="IPR023231">
    <property type="entry name" value="GSKIP_dom_sf"/>
</dbReference>
<dbReference type="InterPro" id="IPR011990">
    <property type="entry name" value="TPR-like_helical_dom_sf"/>
</dbReference>
<dbReference type="PANTHER" id="PTHR12601:SF6">
    <property type="entry name" value="CLUSTERED MITOCHONDRIA PROTEIN HOMOLOG"/>
    <property type="match status" value="1"/>
</dbReference>
<dbReference type="PANTHER" id="PTHR12601">
    <property type="entry name" value="EUKARYOTIC TRANSLATION INITIATION FACTOR 3 SUBUNIT EIF-3"/>
    <property type="match status" value="1"/>
</dbReference>
<dbReference type="Pfam" id="PF13236">
    <property type="entry name" value="CLU"/>
    <property type="match status" value="1"/>
</dbReference>
<dbReference type="Pfam" id="PF15044">
    <property type="entry name" value="CLU_N"/>
    <property type="match status" value="1"/>
</dbReference>
<dbReference type="Pfam" id="PF12807">
    <property type="entry name" value="eIF3_p135"/>
    <property type="match status" value="1"/>
</dbReference>
<dbReference type="Pfam" id="PF05303">
    <property type="entry name" value="GSKIP_dom"/>
    <property type="match status" value="1"/>
</dbReference>
<dbReference type="Pfam" id="PF13374">
    <property type="entry name" value="TPR_10"/>
    <property type="match status" value="1"/>
</dbReference>
<dbReference type="Pfam" id="PF13424">
    <property type="entry name" value="TPR_12"/>
    <property type="match status" value="1"/>
</dbReference>
<dbReference type="SUPFAM" id="SSF103107">
    <property type="entry name" value="Hypothetical protein c14orf129, hspc210"/>
    <property type="match status" value="1"/>
</dbReference>
<dbReference type="SUPFAM" id="SSF48452">
    <property type="entry name" value="TPR-like"/>
    <property type="match status" value="2"/>
</dbReference>
<dbReference type="PROSITE" id="PS51823">
    <property type="entry name" value="CLU"/>
    <property type="match status" value="1"/>
</dbReference>
<reference key="1">
    <citation type="journal article" date="2000" name="Science">
        <title>The genome sequence of Drosophila melanogaster.</title>
        <authorList>
            <person name="Adams M.D."/>
            <person name="Celniker S.E."/>
            <person name="Holt R.A."/>
            <person name="Evans C.A."/>
            <person name="Gocayne J.D."/>
            <person name="Amanatides P.G."/>
            <person name="Scherer S.E."/>
            <person name="Li P.W."/>
            <person name="Hoskins R.A."/>
            <person name="Galle R.F."/>
            <person name="George R.A."/>
            <person name="Lewis S.E."/>
            <person name="Richards S."/>
            <person name="Ashburner M."/>
            <person name="Henderson S.N."/>
            <person name="Sutton G.G."/>
            <person name="Wortman J.R."/>
            <person name="Yandell M.D."/>
            <person name="Zhang Q."/>
            <person name="Chen L.X."/>
            <person name="Brandon R.C."/>
            <person name="Rogers Y.-H.C."/>
            <person name="Blazej R.G."/>
            <person name="Champe M."/>
            <person name="Pfeiffer B.D."/>
            <person name="Wan K.H."/>
            <person name="Doyle C."/>
            <person name="Baxter E.G."/>
            <person name="Helt G."/>
            <person name="Nelson C.R."/>
            <person name="Miklos G.L.G."/>
            <person name="Abril J.F."/>
            <person name="Agbayani A."/>
            <person name="An H.-J."/>
            <person name="Andrews-Pfannkoch C."/>
            <person name="Baldwin D."/>
            <person name="Ballew R.M."/>
            <person name="Basu A."/>
            <person name="Baxendale J."/>
            <person name="Bayraktaroglu L."/>
            <person name="Beasley E.M."/>
            <person name="Beeson K.Y."/>
            <person name="Benos P.V."/>
            <person name="Berman B.P."/>
            <person name="Bhandari D."/>
            <person name="Bolshakov S."/>
            <person name="Borkova D."/>
            <person name="Botchan M.R."/>
            <person name="Bouck J."/>
            <person name="Brokstein P."/>
            <person name="Brottier P."/>
            <person name="Burtis K.C."/>
            <person name="Busam D.A."/>
            <person name="Butler H."/>
            <person name="Cadieu E."/>
            <person name="Center A."/>
            <person name="Chandra I."/>
            <person name="Cherry J.M."/>
            <person name="Cawley S."/>
            <person name="Dahlke C."/>
            <person name="Davenport L.B."/>
            <person name="Davies P."/>
            <person name="de Pablos B."/>
            <person name="Delcher A."/>
            <person name="Deng Z."/>
            <person name="Mays A.D."/>
            <person name="Dew I."/>
            <person name="Dietz S.M."/>
            <person name="Dodson K."/>
            <person name="Doup L.E."/>
            <person name="Downes M."/>
            <person name="Dugan-Rocha S."/>
            <person name="Dunkov B.C."/>
            <person name="Dunn P."/>
            <person name="Durbin K.J."/>
            <person name="Evangelista C.C."/>
            <person name="Ferraz C."/>
            <person name="Ferriera S."/>
            <person name="Fleischmann W."/>
            <person name="Fosler C."/>
            <person name="Gabrielian A.E."/>
            <person name="Garg N.S."/>
            <person name="Gelbart W.M."/>
            <person name="Glasser K."/>
            <person name="Glodek A."/>
            <person name="Gong F."/>
            <person name="Gorrell J.H."/>
            <person name="Gu Z."/>
            <person name="Guan P."/>
            <person name="Harris M."/>
            <person name="Harris N.L."/>
            <person name="Harvey D.A."/>
            <person name="Heiman T.J."/>
            <person name="Hernandez J.R."/>
            <person name="Houck J."/>
            <person name="Hostin D."/>
            <person name="Houston K.A."/>
            <person name="Howland T.J."/>
            <person name="Wei M.-H."/>
            <person name="Ibegwam C."/>
            <person name="Jalali M."/>
            <person name="Kalush F."/>
            <person name="Karpen G.H."/>
            <person name="Ke Z."/>
            <person name="Kennison J.A."/>
            <person name="Ketchum K.A."/>
            <person name="Kimmel B.E."/>
            <person name="Kodira C.D."/>
            <person name="Kraft C.L."/>
            <person name="Kravitz S."/>
            <person name="Kulp D."/>
            <person name="Lai Z."/>
            <person name="Lasko P."/>
            <person name="Lei Y."/>
            <person name="Levitsky A.A."/>
            <person name="Li J.H."/>
            <person name="Li Z."/>
            <person name="Liang Y."/>
            <person name="Lin X."/>
            <person name="Liu X."/>
            <person name="Mattei B."/>
            <person name="McIntosh T.C."/>
            <person name="McLeod M.P."/>
            <person name="McPherson D."/>
            <person name="Merkulov G."/>
            <person name="Milshina N.V."/>
            <person name="Mobarry C."/>
            <person name="Morris J."/>
            <person name="Moshrefi A."/>
            <person name="Mount S.M."/>
            <person name="Moy M."/>
            <person name="Murphy B."/>
            <person name="Murphy L."/>
            <person name="Muzny D.M."/>
            <person name="Nelson D.L."/>
            <person name="Nelson D.R."/>
            <person name="Nelson K.A."/>
            <person name="Nixon K."/>
            <person name="Nusskern D.R."/>
            <person name="Pacleb J.M."/>
            <person name="Palazzolo M."/>
            <person name="Pittman G.S."/>
            <person name="Pan S."/>
            <person name="Pollard J."/>
            <person name="Puri V."/>
            <person name="Reese M.G."/>
            <person name="Reinert K."/>
            <person name="Remington K."/>
            <person name="Saunders R.D.C."/>
            <person name="Scheeler F."/>
            <person name="Shen H."/>
            <person name="Shue B.C."/>
            <person name="Siden-Kiamos I."/>
            <person name="Simpson M."/>
            <person name="Skupski M.P."/>
            <person name="Smith T.J."/>
            <person name="Spier E."/>
            <person name="Spradling A.C."/>
            <person name="Stapleton M."/>
            <person name="Strong R."/>
            <person name="Sun E."/>
            <person name="Svirskas R."/>
            <person name="Tector C."/>
            <person name="Turner R."/>
            <person name="Venter E."/>
            <person name="Wang A.H."/>
            <person name="Wang X."/>
            <person name="Wang Z.-Y."/>
            <person name="Wassarman D.A."/>
            <person name="Weinstock G.M."/>
            <person name="Weissenbach J."/>
            <person name="Williams S.M."/>
            <person name="Woodage T."/>
            <person name="Worley K.C."/>
            <person name="Wu D."/>
            <person name="Yang S."/>
            <person name="Yao Q.A."/>
            <person name="Ye J."/>
            <person name="Yeh R.-F."/>
            <person name="Zaveri J.S."/>
            <person name="Zhan M."/>
            <person name="Zhang G."/>
            <person name="Zhao Q."/>
            <person name="Zheng L."/>
            <person name="Zheng X.H."/>
            <person name="Zhong F.N."/>
            <person name="Zhong W."/>
            <person name="Zhou X."/>
            <person name="Zhu S.C."/>
            <person name="Zhu X."/>
            <person name="Smith H.O."/>
            <person name="Gibbs R.A."/>
            <person name="Myers E.W."/>
            <person name="Rubin G.M."/>
            <person name="Venter J.C."/>
        </authorList>
    </citation>
    <scope>NUCLEOTIDE SEQUENCE [LARGE SCALE GENOMIC DNA]</scope>
    <source>
        <strain>Berkeley</strain>
    </source>
</reference>
<reference key="2">
    <citation type="journal article" date="2002" name="Genome Biol.">
        <title>Annotation of the Drosophila melanogaster euchromatic genome: a systematic review.</title>
        <authorList>
            <person name="Misra S."/>
            <person name="Crosby M.A."/>
            <person name="Mungall C.J."/>
            <person name="Matthews B.B."/>
            <person name="Campbell K.S."/>
            <person name="Hradecky P."/>
            <person name="Huang Y."/>
            <person name="Kaminker J.S."/>
            <person name="Millburn G.H."/>
            <person name="Prochnik S.E."/>
            <person name="Smith C.D."/>
            <person name="Tupy J.L."/>
            <person name="Whitfield E.J."/>
            <person name="Bayraktaroglu L."/>
            <person name="Berman B.P."/>
            <person name="Bettencourt B.R."/>
            <person name="Celniker S.E."/>
            <person name="de Grey A.D.N.J."/>
            <person name="Drysdale R.A."/>
            <person name="Harris N.L."/>
            <person name="Richter J."/>
            <person name="Russo S."/>
            <person name="Schroeder A.J."/>
            <person name="Shu S.Q."/>
            <person name="Stapleton M."/>
            <person name="Yamada C."/>
            <person name="Ashburner M."/>
            <person name="Gelbart W.M."/>
            <person name="Rubin G.M."/>
            <person name="Lewis S.E."/>
        </authorList>
    </citation>
    <scope>GENOME REANNOTATION</scope>
    <source>
        <strain>Berkeley</strain>
    </source>
</reference>
<reference key="3">
    <citation type="submission" date="2004-01" db="EMBL/GenBank/DDBJ databases">
        <authorList>
            <person name="Stapleton M."/>
            <person name="Carlson J.W."/>
            <person name="Chavez C."/>
            <person name="Frise E."/>
            <person name="George R.A."/>
            <person name="Pacleb J.M."/>
            <person name="Park S."/>
            <person name="Wan K.H."/>
            <person name="Yu C."/>
            <person name="Rubin G.M."/>
            <person name="Celniker S.E."/>
        </authorList>
    </citation>
    <scope>NUCLEOTIDE SEQUENCE [LARGE SCALE MRNA]</scope>
    <source>
        <strain>Berkeley</strain>
        <tissue>Embryo</tissue>
    </source>
</reference>
<reference key="4">
    <citation type="journal article" date="2008" name="J. Proteome Res.">
        <title>Phosphoproteome analysis of Drosophila melanogaster embryos.</title>
        <authorList>
            <person name="Zhai B."/>
            <person name="Villen J."/>
            <person name="Beausoleil S.A."/>
            <person name="Mintseris J."/>
            <person name="Gygi S.P."/>
        </authorList>
    </citation>
    <scope>PHOSPHORYLATION [LARGE SCALE ANALYSIS] AT SER-270</scope>
    <scope>IDENTIFICATION BY MASS SPECTROMETRY</scope>
    <source>
        <tissue>Embryo</tissue>
    </source>
</reference>
<reference key="5">
    <citation type="journal article" date="2009" name="Dis. Model. Mech.">
        <title>Clueless, a conserved Drosophila gene required for mitochondrial subcellular localization, interacts genetically with parkin.</title>
        <authorList>
            <person name="Cox R.T."/>
            <person name="Spradling A.C."/>
        </authorList>
    </citation>
    <scope>FUNCTION</scope>
    <scope>DISRUPTION PHENOTYPE</scope>
    <scope>SUBCELLULAR LOCATION</scope>
</reference>